<sequence length="533" mass="61144">MQLHISPSMRSITISSSNEFIDLMKIKVAARHISYRTLFHTILILAFLLPFVFILTAVVTLEGVNKCSSFDCFGRRLGPRLLGRIDDSEQRLVRDFYKILNEVSTQEIPDGLKLPESFSQLVSDMKNNHYDAKTFALVFRAMVEKFERDLRESKFAELMNKHFAASSIPKGIHCLSLRLTDEYSSNAHARRQLPSPELLPVLSDNAYHHFVLATDNILAASVVVSSAVQSSSKPEKIVFHVITDKKTYAGMHSWFALNSVAPAIVEVKSVHQFDWLTRENVPVLEAVESHNSIRNYYHGNHIAGANLSETTPRTFASKLQSRSPKYISLLNHLRIYLPELFPNLDKVVFLDDDIVIQKDLSPLWDIDLNGKVNGAVETCRGEDVWVMSKRLRNYFNFSHPLIAKHLDPEECAWAYGMNIFDLRTWRKTNIRETYHSWLKENLKSNLTMWKLGTLPPALIAFKGHVQPIDSSWHMLGLGYQSKTNLENAKKAAVIHYNGQSKPWLEIGFEHLRPFWTKYVNYSNDFIKNCHILE</sequence>
<accession>Q0WV13</accession>
<accession>B3H768</accession>
<accession>Q9MAB8</accession>
<protein>
    <recommendedName>
        <fullName evidence="6">Probable galacturonosyltransferase 13</fullName>
        <ecNumber evidence="8">2.4.1.-</ecNumber>
    </recommendedName>
</protein>
<organism>
    <name type="scientific">Arabidopsis thaliana</name>
    <name type="common">Mouse-ear cress</name>
    <dbReference type="NCBI Taxonomy" id="3702"/>
    <lineage>
        <taxon>Eukaryota</taxon>
        <taxon>Viridiplantae</taxon>
        <taxon>Streptophyta</taxon>
        <taxon>Embryophyta</taxon>
        <taxon>Tracheophyta</taxon>
        <taxon>Spermatophyta</taxon>
        <taxon>Magnoliopsida</taxon>
        <taxon>eudicotyledons</taxon>
        <taxon>Gunneridae</taxon>
        <taxon>Pentapetalae</taxon>
        <taxon>rosids</taxon>
        <taxon>malvids</taxon>
        <taxon>Brassicales</taxon>
        <taxon>Brassicaceae</taxon>
        <taxon>Camelineae</taxon>
        <taxon>Arabidopsis</taxon>
    </lineage>
</organism>
<comment type="function">
    <text evidence="1 4">May be involved in pectin and/or xylans biosynthesis in cell walls (By similarity). Together with GAUT14, required for pollen tube growth, possibly through the regulation of pectin biosynthesis and repartition in the pollen tube wall (PubMed:23709340).</text>
</comment>
<comment type="pathway">
    <text evidence="1">Glycan metabolism; pectin biosynthesis.</text>
</comment>
<comment type="subcellular location">
    <subcellularLocation>
        <location evidence="4">Golgi apparatus membrane</location>
        <topology evidence="2">Single-pass type II membrane protein</topology>
    </subcellularLocation>
</comment>
<comment type="alternative products">
    <event type="alternative splicing"/>
    <isoform>
        <id>Q0WV13-1</id>
        <name>1</name>
        <sequence type="displayed"/>
    </isoform>
    <isoform>
        <id>Q0WV13-2</id>
        <name>2</name>
        <sequence type="described" ref="VSP_038821"/>
    </isoform>
</comment>
<comment type="tissue specificity">
    <text evidence="3 4">Expressed in roots, inflorescences, siliques, leaves and stems (PubMed:19825675). Accumulates in pollen grains (PubMed:23709340).</text>
</comment>
<comment type="developmental stage">
    <text evidence="4">Strongly expressed in pollen grains and pollen tubes.</text>
</comment>
<comment type="disruption phenotype">
    <text evidence="4 5">The pollen tube growth defects of plants lacking TOD1 are partially suppressed by gaut13 mutation (PubMed:25591940). The gaut13 gaut14 double mutant is defective in male gametophyte function; swollen pollen tubes disturbed in elongation, and characterized by a disorganized outer layer cell wall with an altered repartition of pectin (e.g. homogalacturonan) (PubMed:23709340).</text>
</comment>
<comment type="similarity">
    <text evidence="7">Belongs to the glycosyltransferase 8 family.</text>
</comment>
<comment type="sequence caution" evidence="7">
    <conflict type="erroneous initiation">
        <sequence resource="EMBL-CDS" id="AAF26170"/>
    </conflict>
</comment>
<gene>
    <name evidence="6" type="primary">GAUT13</name>
    <name evidence="9" type="ordered locus">At3g01040</name>
    <name evidence="10" type="ORF">T4P13.28</name>
</gene>
<name>GAUTD_ARATH</name>
<keyword id="KW-0025">Alternative splicing</keyword>
<keyword id="KW-0961">Cell wall biogenesis/degradation</keyword>
<keyword id="KW-0325">Glycoprotein</keyword>
<keyword id="KW-0328">Glycosyltransferase</keyword>
<keyword id="KW-0333">Golgi apparatus</keyword>
<keyword id="KW-0472">Membrane</keyword>
<keyword id="KW-1185">Reference proteome</keyword>
<keyword id="KW-0735">Signal-anchor</keyword>
<keyword id="KW-0808">Transferase</keyword>
<keyword id="KW-0812">Transmembrane</keyword>
<keyword id="KW-1133">Transmembrane helix</keyword>
<feature type="chain" id="PRO_0000392563" description="Probable galacturonosyltransferase 13">
    <location>
        <begin position="1"/>
        <end position="533"/>
    </location>
</feature>
<feature type="topological domain" description="Cytoplasmic" evidence="2">
    <location>
        <begin position="1"/>
        <end position="40"/>
    </location>
</feature>
<feature type="transmembrane region" description="Helical; Signal-anchor for type II membrane protein" evidence="2">
    <location>
        <begin position="41"/>
        <end position="61"/>
    </location>
</feature>
<feature type="topological domain" description="Lumenal" evidence="2">
    <location>
        <begin position="62"/>
        <end position="533"/>
    </location>
</feature>
<feature type="glycosylation site" description="N-linked (GlcNAc...) asparagine" evidence="2">
    <location>
        <position position="306"/>
    </location>
</feature>
<feature type="glycosylation site" description="N-linked (GlcNAc...) asparagine" evidence="2">
    <location>
        <position position="396"/>
    </location>
</feature>
<feature type="glycosylation site" description="N-linked (GlcNAc...) asparagine" evidence="2">
    <location>
        <position position="445"/>
    </location>
</feature>
<feature type="glycosylation site" description="N-linked (GlcNAc...) asparagine" evidence="2">
    <location>
        <position position="520"/>
    </location>
</feature>
<feature type="splice variant" id="VSP_038821" description="In isoform 2." evidence="7">
    <location>
        <position position="90"/>
    </location>
</feature>
<reference key="1">
    <citation type="journal article" date="2000" name="Nature">
        <title>Sequence and analysis of chromosome 3 of the plant Arabidopsis thaliana.</title>
        <authorList>
            <person name="Salanoubat M."/>
            <person name="Lemcke K."/>
            <person name="Rieger M."/>
            <person name="Ansorge W."/>
            <person name="Unseld M."/>
            <person name="Fartmann B."/>
            <person name="Valle G."/>
            <person name="Bloecker H."/>
            <person name="Perez-Alonso M."/>
            <person name="Obermaier B."/>
            <person name="Delseny M."/>
            <person name="Boutry M."/>
            <person name="Grivell L.A."/>
            <person name="Mache R."/>
            <person name="Puigdomenech P."/>
            <person name="De Simone V."/>
            <person name="Choisne N."/>
            <person name="Artiguenave F."/>
            <person name="Robert C."/>
            <person name="Brottier P."/>
            <person name="Wincker P."/>
            <person name="Cattolico L."/>
            <person name="Weissenbach J."/>
            <person name="Saurin W."/>
            <person name="Quetier F."/>
            <person name="Schaefer M."/>
            <person name="Mueller-Auer S."/>
            <person name="Gabel C."/>
            <person name="Fuchs M."/>
            <person name="Benes V."/>
            <person name="Wurmbach E."/>
            <person name="Drzonek H."/>
            <person name="Erfle H."/>
            <person name="Jordan N."/>
            <person name="Bangert S."/>
            <person name="Wiedelmann R."/>
            <person name="Kranz H."/>
            <person name="Voss H."/>
            <person name="Holland R."/>
            <person name="Brandt P."/>
            <person name="Nyakatura G."/>
            <person name="Vezzi A."/>
            <person name="D'Angelo M."/>
            <person name="Pallavicini A."/>
            <person name="Toppo S."/>
            <person name="Simionati B."/>
            <person name="Conrad A."/>
            <person name="Hornischer K."/>
            <person name="Kauer G."/>
            <person name="Loehnert T.-H."/>
            <person name="Nordsiek G."/>
            <person name="Reichelt J."/>
            <person name="Scharfe M."/>
            <person name="Schoen O."/>
            <person name="Bargues M."/>
            <person name="Terol J."/>
            <person name="Climent J."/>
            <person name="Navarro P."/>
            <person name="Collado C."/>
            <person name="Perez-Perez A."/>
            <person name="Ottenwaelder B."/>
            <person name="Duchemin D."/>
            <person name="Cooke R."/>
            <person name="Laudie M."/>
            <person name="Berger-Llauro C."/>
            <person name="Purnelle B."/>
            <person name="Masuy D."/>
            <person name="de Haan M."/>
            <person name="Maarse A.C."/>
            <person name="Alcaraz J.-P."/>
            <person name="Cottet A."/>
            <person name="Casacuberta E."/>
            <person name="Monfort A."/>
            <person name="Argiriou A."/>
            <person name="Flores M."/>
            <person name="Liguori R."/>
            <person name="Vitale D."/>
            <person name="Mannhaupt G."/>
            <person name="Haase D."/>
            <person name="Schoof H."/>
            <person name="Rudd S."/>
            <person name="Zaccaria P."/>
            <person name="Mewes H.-W."/>
            <person name="Mayer K.F.X."/>
            <person name="Kaul S."/>
            <person name="Town C.D."/>
            <person name="Koo H.L."/>
            <person name="Tallon L.J."/>
            <person name="Jenkins J."/>
            <person name="Rooney T."/>
            <person name="Rizzo M."/>
            <person name="Walts A."/>
            <person name="Utterback T."/>
            <person name="Fujii C.Y."/>
            <person name="Shea T.P."/>
            <person name="Creasy T.H."/>
            <person name="Haas B."/>
            <person name="Maiti R."/>
            <person name="Wu D."/>
            <person name="Peterson J."/>
            <person name="Van Aken S."/>
            <person name="Pai G."/>
            <person name="Militscher J."/>
            <person name="Sellers P."/>
            <person name="Gill J.E."/>
            <person name="Feldblyum T.V."/>
            <person name="Preuss D."/>
            <person name="Lin X."/>
            <person name="Nierman W.C."/>
            <person name="Salzberg S.L."/>
            <person name="White O."/>
            <person name="Venter J.C."/>
            <person name="Fraser C.M."/>
            <person name="Kaneko T."/>
            <person name="Nakamura Y."/>
            <person name="Sato S."/>
            <person name="Kato T."/>
            <person name="Asamizu E."/>
            <person name="Sasamoto S."/>
            <person name="Kimura T."/>
            <person name="Idesawa K."/>
            <person name="Kawashima K."/>
            <person name="Kishida Y."/>
            <person name="Kiyokawa C."/>
            <person name="Kohara M."/>
            <person name="Matsumoto M."/>
            <person name="Matsuno A."/>
            <person name="Muraki A."/>
            <person name="Nakayama S."/>
            <person name="Nakazaki N."/>
            <person name="Shinpo S."/>
            <person name="Takeuchi C."/>
            <person name="Wada T."/>
            <person name="Watanabe A."/>
            <person name="Yamada M."/>
            <person name="Yasuda M."/>
            <person name="Tabata S."/>
        </authorList>
    </citation>
    <scope>NUCLEOTIDE SEQUENCE [LARGE SCALE GENOMIC DNA]</scope>
    <source>
        <strain>cv. Columbia</strain>
    </source>
</reference>
<reference key="2">
    <citation type="journal article" date="2017" name="Plant J.">
        <title>Araport11: a complete reannotation of the Arabidopsis thaliana reference genome.</title>
        <authorList>
            <person name="Cheng C.Y."/>
            <person name="Krishnakumar V."/>
            <person name="Chan A.P."/>
            <person name="Thibaud-Nissen F."/>
            <person name="Schobel S."/>
            <person name="Town C.D."/>
        </authorList>
    </citation>
    <scope>GENOME REANNOTATION</scope>
    <source>
        <strain>cv. Columbia</strain>
    </source>
</reference>
<reference key="3">
    <citation type="submission" date="2006-07" db="EMBL/GenBank/DDBJ databases">
        <title>Large-scale analysis of RIKEN Arabidopsis full-length (RAFL) cDNAs.</title>
        <authorList>
            <person name="Totoki Y."/>
            <person name="Seki M."/>
            <person name="Ishida J."/>
            <person name="Nakajima M."/>
            <person name="Enju A."/>
            <person name="Kamiya A."/>
            <person name="Narusaka M."/>
            <person name="Shin-i T."/>
            <person name="Nakagawa M."/>
            <person name="Sakamoto N."/>
            <person name="Oishi K."/>
            <person name="Kohara Y."/>
            <person name="Kobayashi M."/>
            <person name="Toyoda A."/>
            <person name="Sakaki Y."/>
            <person name="Sakurai T."/>
            <person name="Iida K."/>
            <person name="Akiyama K."/>
            <person name="Satou M."/>
            <person name="Toyoda T."/>
            <person name="Konagaya A."/>
            <person name="Carninci P."/>
            <person name="Kawai J."/>
            <person name="Hayashizaki Y."/>
            <person name="Shinozaki K."/>
        </authorList>
    </citation>
    <scope>NUCLEOTIDE SEQUENCE [LARGE SCALE MRNA] (ISOFORM 1)</scope>
    <source>
        <strain>cv. Columbia</strain>
    </source>
</reference>
<reference key="4">
    <citation type="submission" date="2007-02" db="EMBL/GenBank/DDBJ databases">
        <title>Arabidopsis ORF clones.</title>
        <authorList>
            <person name="Bautista V.R."/>
            <person name="Kim C.J."/>
            <person name="Chen H."/>
            <person name="Wu S.Y."/>
            <person name="De Los Reyes C."/>
            <person name="Ecker J.R."/>
        </authorList>
    </citation>
    <scope>NUCLEOTIDE SEQUENCE [LARGE SCALE MRNA] (ISOFORM 1)</scope>
</reference>
<reference key="5">
    <citation type="journal article" date="2006" name="Proc. Natl. Acad. Sci. U.S.A.">
        <title>Functional identification of an Arabidopsis pectin biosynthetic homogalacturonan galacturonosyltransferase.</title>
        <authorList>
            <person name="Sterling J.D."/>
            <person name="Atmodjo M.A."/>
            <person name="Inwood S.E."/>
            <person name="Kumar Kolli V.S."/>
            <person name="Quigley H.F."/>
            <person name="Hahn M.G."/>
            <person name="Mohnen D."/>
        </authorList>
    </citation>
    <scope>GENE FAMILY</scope>
    <scope>NOMENCLATURE</scope>
</reference>
<reference key="6">
    <citation type="journal article" date="2009" name="Mol. Plant">
        <title>Arabidopsis thaliana T-DNA mutants implicate GAUT genes in the biosynthesis of pectin and xylan in cell walls and seed testa.</title>
        <authorList>
            <person name="Caffall K.H."/>
            <person name="Pattathil S."/>
            <person name="Phillips S.E."/>
            <person name="Hahn M.G."/>
            <person name="Mohnen D."/>
        </authorList>
    </citation>
    <scope>TISSUE SPECIFICITY</scope>
    <scope>CATALYTIC ACTIVITY</scope>
</reference>
<reference key="7">
    <citation type="journal article" date="2013" name="Mol. Plant">
        <title>Arabidopsis galacturonosyltransferase (GAUT) 13 and GAUT14 have redundant functions in pollen tube growth.</title>
        <authorList>
            <person name="Wang L."/>
            <person name="Wang W."/>
            <person name="Wang Y.-Q."/>
            <person name="Liu Y.-Y."/>
            <person name="Wang J.-X."/>
            <person name="Zhang X.-Q."/>
            <person name="Ye D."/>
            <person name="Chen L.-Q."/>
        </authorList>
    </citation>
    <scope>FUNCTION</scope>
    <scope>DISRUPTION PHENOTYPE</scope>
    <scope>SUBCELLULAR LOCATION</scope>
    <scope>TISSUE SPECIFICITY</scope>
    <scope>DEVELOPMENTAL STAGE</scope>
    <source>
        <strain>cv. Columbia</strain>
        <strain>cv. Wassilewskija</strain>
    </source>
</reference>
<reference key="8">
    <citation type="journal article" date="2015" name="Nat. Commun.">
        <title>The Arabidopsis alkaline ceramidase TOD1 is a key turgor pressure regulator in plant cells.</title>
        <authorList>
            <person name="Chen L.-Y."/>
            <person name="Shi D.-Q."/>
            <person name="Zhang W.-J."/>
            <person name="Tang Z.-S."/>
            <person name="Liu J."/>
            <person name="Yang W.-C."/>
        </authorList>
    </citation>
    <scope>DISRUPTION PHENOTYPE</scope>
    <source>
        <strain>cv. Landsberg erecta</strain>
    </source>
</reference>
<proteinExistence type="evidence at protein level"/>
<dbReference type="EC" id="2.4.1.-" evidence="8"/>
<dbReference type="EMBL" id="AC008261">
    <property type="protein sequence ID" value="AAF26170.1"/>
    <property type="status" value="ALT_INIT"/>
    <property type="molecule type" value="Genomic_DNA"/>
</dbReference>
<dbReference type="EMBL" id="CP002686">
    <property type="protein sequence ID" value="AEE73599.1"/>
    <property type="molecule type" value="Genomic_DNA"/>
</dbReference>
<dbReference type="EMBL" id="CP002686">
    <property type="protein sequence ID" value="ANM63701.1"/>
    <property type="molecule type" value="Genomic_DNA"/>
</dbReference>
<dbReference type="EMBL" id="AK226967">
    <property type="protein sequence ID" value="BAE99035.1"/>
    <property type="molecule type" value="mRNA"/>
</dbReference>
<dbReference type="EMBL" id="BT030321">
    <property type="protein sequence ID" value="ABO09884.1"/>
    <property type="molecule type" value="mRNA"/>
</dbReference>
<dbReference type="RefSeq" id="NP_001118545.1">
    <molecule id="Q0WV13-2"/>
    <property type="nucleotide sequence ID" value="NM_001125073.2"/>
</dbReference>
<dbReference type="RefSeq" id="NP_001319437.1">
    <molecule id="Q0WV13-2"/>
    <property type="nucleotide sequence ID" value="NM_001337305.1"/>
</dbReference>
<dbReference type="SMR" id="Q0WV13"/>
<dbReference type="FunCoup" id="Q0WV13">
    <property type="interactions" value="424"/>
</dbReference>
<dbReference type="STRING" id="3702.Q0WV13"/>
<dbReference type="CAZy" id="GT8">
    <property type="family name" value="Glycosyltransferase Family 8"/>
</dbReference>
<dbReference type="GlyCosmos" id="Q0WV13">
    <property type="glycosylation" value="4 sites, No reported glycans"/>
</dbReference>
<dbReference type="GlyGen" id="Q0WV13">
    <property type="glycosylation" value="4 sites"/>
</dbReference>
<dbReference type="iPTMnet" id="Q0WV13"/>
<dbReference type="PaxDb" id="3702-AT3G01040.1"/>
<dbReference type="ProteomicsDB" id="221908">
    <molecule id="Q0WV13-1"/>
</dbReference>
<dbReference type="EnsemblPlants" id="AT3G01040.2">
    <molecule id="Q0WV13-2"/>
    <property type="protein sequence ID" value="AT3G01040.2"/>
    <property type="gene ID" value="AT3G01040"/>
</dbReference>
<dbReference type="EnsemblPlants" id="AT3G01040.3">
    <molecule id="Q0WV13-2"/>
    <property type="protein sequence ID" value="AT3G01040.3"/>
    <property type="gene ID" value="AT3G01040"/>
</dbReference>
<dbReference type="GeneID" id="821312"/>
<dbReference type="Gramene" id="AT3G01040.2">
    <molecule id="Q0WV13-2"/>
    <property type="protein sequence ID" value="AT3G01040.2"/>
    <property type="gene ID" value="AT3G01040"/>
</dbReference>
<dbReference type="Gramene" id="AT3G01040.3">
    <molecule id="Q0WV13-2"/>
    <property type="protein sequence ID" value="AT3G01040.3"/>
    <property type="gene ID" value="AT3G01040"/>
</dbReference>
<dbReference type="KEGG" id="ath:AT3G01040"/>
<dbReference type="Araport" id="AT3G01040"/>
<dbReference type="TAIR" id="AT3G01040">
    <property type="gene designation" value="GAUT13"/>
</dbReference>
<dbReference type="eggNOG" id="ENOG502QQKV">
    <property type="taxonomic scope" value="Eukaryota"/>
</dbReference>
<dbReference type="HOGENOM" id="CLU_010770_5_1_1"/>
<dbReference type="InParanoid" id="Q0WV13"/>
<dbReference type="OMA" id="GYQKNTS"/>
<dbReference type="OrthoDB" id="411524at2759"/>
<dbReference type="PhylomeDB" id="Q0WV13"/>
<dbReference type="UniPathway" id="UPA00845"/>
<dbReference type="PRO" id="PR:Q0WV13"/>
<dbReference type="Proteomes" id="UP000006548">
    <property type="component" value="Chromosome 3"/>
</dbReference>
<dbReference type="ExpressionAtlas" id="Q0WV13">
    <property type="expression patterns" value="baseline and differential"/>
</dbReference>
<dbReference type="GO" id="GO:0005794">
    <property type="term" value="C:Golgi apparatus"/>
    <property type="evidence" value="ECO:0000314"/>
    <property type="project" value="TAIR"/>
</dbReference>
<dbReference type="GO" id="GO:0000139">
    <property type="term" value="C:Golgi membrane"/>
    <property type="evidence" value="ECO:0007669"/>
    <property type="project" value="UniProtKB-SubCell"/>
</dbReference>
<dbReference type="GO" id="GO:0090406">
    <property type="term" value="C:pollen tube"/>
    <property type="evidence" value="ECO:0000314"/>
    <property type="project" value="TAIR"/>
</dbReference>
<dbReference type="GO" id="GO:0047262">
    <property type="term" value="F:polygalacturonate 4-alpha-galacturonosyltransferase activity"/>
    <property type="evidence" value="ECO:0000250"/>
    <property type="project" value="TAIR"/>
</dbReference>
<dbReference type="GO" id="GO:0052325">
    <property type="term" value="P:cell wall pectin biosynthetic process"/>
    <property type="evidence" value="ECO:0000316"/>
    <property type="project" value="TAIR"/>
</dbReference>
<dbReference type="GO" id="GO:0009555">
    <property type="term" value="P:pollen development"/>
    <property type="evidence" value="ECO:0000316"/>
    <property type="project" value="TAIR"/>
</dbReference>
<dbReference type="GO" id="GO:0009860">
    <property type="term" value="P:pollen tube growth"/>
    <property type="evidence" value="ECO:0000316"/>
    <property type="project" value="TAIR"/>
</dbReference>
<dbReference type="CDD" id="cd06429">
    <property type="entry name" value="GT8_like_1"/>
    <property type="match status" value="1"/>
</dbReference>
<dbReference type="Gene3D" id="3.90.550.10">
    <property type="entry name" value="Spore Coat Polysaccharide Biosynthesis Protein SpsA, Chain A"/>
    <property type="match status" value="1"/>
</dbReference>
<dbReference type="InterPro" id="IPR029993">
    <property type="entry name" value="GAUT"/>
</dbReference>
<dbReference type="InterPro" id="IPR002495">
    <property type="entry name" value="Glyco_trans_8"/>
</dbReference>
<dbReference type="InterPro" id="IPR029044">
    <property type="entry name" value="Nucleotide-diphossugar_trans"/>
</dbReference>
<dbReference type="PANTHER" id="PTHR32116:SF27">
    <property type="entry name" value="GALACTURONOSYLTRANSFERASE 13-RELATED"/>
    <property type="match status" value="1"/>
</dbReference>
<dbReference type="PANTHER" id="PTHR32116">
    <property type="entry name" value="GALACTURONOSYLTRANSFERASE 4-RELATED"/>
    <property type="match status" value="1"/>
</dbReference>
<dbReference type="Pfam" id="PF01501">
    <property type="entry name" value="Glyco_transf_8"/>
    <property type="match status" value="1"/>
</dbReference>
<dbReference type="SUPFAM" id="SSF53448">
    <property type="entry name" value="Nucleotide-diphospho-sugar transferases"/>
    <property type="match status" value="1"/>
</dbReference>
<evidence type="ECO:0000250" key="1">
    <source>
        <dbReference type="UniProtKB" id="Q9LE59"/>
    </source>
</evidence>
<evidence type="ECO:0000255" key="2"/>
<evidence type="ECO:0000269" key="3">
    <source>
    </source>
</evidence>
<evidence type="ECO:0000269" key="4">
    <source>
    </source>
</evidence>
<evidence type="ECO:0000269" key="5">
    <source>
    </source>
</evidence>
<evidence type="ECO:0000303" key="6">
    <source>
    </source>
</evidence>
<evidence type="ECO:0000305" key="7"/>
<evidence type="ECO:0000305" key="8">
    <source>
    </source>
</evidence>
<evidence type="ECO:0000312" key="9">
    <source>
        <dbReference type="Araport" id="AT3G01040"/>
    </source>
</evidence>
<evidence type="ECO:0000312" key="10">
    <source>
        <dbReference type="EMBL" id="AAF26170.1"/>
    </source>
</evidence>